<keyword id="KW-0002">3D-structure</keyword>
<keyword id="KW-0687">Ribonucleoprotein</keyword>
<keyword id="KW-0689">Ribosomal protein</keyword>
<keyword id="KW-0694">RNA-binding</keyword>
<keyword id="KW-0699">rRNA-binding</keyword>
<evidence type="ECO:0000255" key="1">
    <source>
        <dbReference type="HAMAP-Rule" id="MF_01306"/>
    </source>
</evidence>
<evidence type="ECO:0000305" key="2"/>
<dbReference type="EMBL" id="AJ938182">
    <property type="protein sequence ID" value="CAI81267.1"/>
    <property type="molecule type" value="Genomic_DNA"/>
</dbReference>
<dbReference type="RefSeq" id="WP_000090512.1">
    <property type="nucleotide sequence ID" value="NC_007622.1"/>
</dbReference>
<dbReference type="PDB" id="6FXC">
    <property type="method" value="EM"/>
    <property type="resolution" value="6.76 A"/>
    <property type="chains" value="Ad/Bd=3-200"/>
</dbReference>
<dbReference type="PDBsum" id="6FXC"/>
<dbReference type="EMDB" id="EMD-3637"/>
<dbReference type="SMR" id="Q2YTH0"/>
<dbReference type="KEGG" id="sab:SAB1578"/>
<dbReference type="HOGENOM" id="CLU_092403_0_1_9"/>
<dbReference type="GO" id="GO:0015935">
    <property type="term" value="C:small ribosomal subunit"/>
    <property type="evidence" value="ECO:0007669"/>
    <property type="project" value="InterPro"/>
</dbReference>
<dbReference type="GO" id="GO:0019843">
    <property type="term" value="F:rRNA binding"/>
    <property type="evidence" value="ECO:0007669"/>
    <property type="project" value="UniProtKB-UniRule"/>
</dbReference>
<dbReference type="GO" id="GO:0003735">
    <property type="term" value="F:structural constituent of ribosome"/>
    <property type="evidence" value="ECO:0007669"/>
    <property type="project" value="InterPro"/>
</dbReference>
<dbReference type="GO" id="GO:0042274">
    <property type="term" value="P:ribosomal small subunit biogenesis"/>
    <property type="evidence" value="ECO:0007669"/>
    <property type="project" value="TreeGrafter"/>
</dbReference>
<dbReference type="GO" id="GO:0006412">
    <property type="term" value="P:translation"/>
    <property type="evidence" value="ECO:0007669"/>
    <property type="project" value="UniProtKB-UniRule"/>
</dbReference>
<dbReference type="CDD" id="cd00165">
    <property type="entry name" value="S4"/>
    <property type="match status" value="1"/>
</dbReference>
<dbReference type="FunFam" id="1.10.1050.10:FF:000001">
    <property type="entry name" value="30S ribosomal protein S4"/>
    <property type="match status" value="1"/>
</dbReference>
<dbReference type="FunFam" id="3.10.290.10:FF:000001">
    <property type="entry name" value="30S ribosomal protein S4"/>
    <property type="match status" value="1"/>
</dbReference>
<dbReference type="Gene3D" id="1.10.1050.10">
    <property type="entry name" value="Ribosomal Protein S4 Delta 41, Chain A, domain 1"/>
    <property type="match status" value="1"/>
</dbReference>
<dbReference type="Gene3D" id="3.10.290.10">
    <property type="entry name" value="RNA-binding S4 domain"/>
    <property type="match status" value="1"/>
</dbReference>
<dbReference type="HAMAP" id="MF_01306_B">
    <property type="entry name" value="Ribosomal_uS4_B"/>
    <property type="match status" value="1"/>
</dbReference>
<dbReference type="InterPro" id="IPR022801">
    <property type="entry name" value="Ribosomal_uS4"/>
</dbReference>
<dbReference type="InterPro" id="IPR005709">
    <property type="entry name" value="Ribosomal_uS4_bac-type"/>
</dbReference>
<dbReference type="InterPro" id="IPR018079">
    <property type="entry name" value="Ribosomal_uS4_CS"/>
</dbReference>
<dbReference type="InterPro" id="IPR001912">
    <property type="entry name" value="Ribosomal_uS4_N"/>
</dbReference>
<dbReference type="InterPro" id="IPR002942">
    <property type="entry name" value="S4_RNA-bd"/>
</dbReference>
<dbReference type="InterPro" id="IPR036986">
    <property type="entry name" value="S4_RNA-bd_sf"/>
</dbReference>
<dbReference type="NCBIfam" id="NF003717">
    <property type="entry name" value="PRK05327.1"/>
    <property type="match status" value="1"/>
</dbReference>
<dbReference type="NCBIfam" id="TIGR01017">
    <property type="entry name" value="rpsD_bact"/>
    <property type="match status" value="1"/>
</dbReference>
<dbReference type="PANTHER" id="PTHR11831">
    <property type="entry name" value="30S 40S RIBOSOMAL PROTEIN"/>
    <property type="match status" value="1"/>
</dbReference>
<dbReference type="PANTHER" id="PTHR11831:SF4">
    <property type="entry name" value="SMALL RIBOSOMAL SUBUNIT PROTEIN US4M"/>
    <property type="match status" value="1"/>
</dbReference>
<dbReference type="Pfam" id="PF00163">
    <property type="entry name" value="Ribosomal_S4"/>
    <property type="match status" value="1"/>
</dbReference>
<dbReference type="Pfam" id="PF01479">
    <property type="entry name" value="S4"/>
    <property type="match status" value="1"/>
</dbReference>
<dbReference type="SMART" id="SM01390">
    <property type="entry name" value="Ribosomal_S4"/>
    <property type="match status" value="1"/>
</dbReference>
<dbReference type="SMART" id="SM00363">
    <property type="entry name" value="S4"/>
    <property type="match status" value="1"/>
</dbReference>
<dbReference type="SUPFAM" id="SSF55174">
    <property type="entry name" value="Alpha-L RNA-binding motif"/>
    <property type="match status" value="1"/>
</dbReference>
<dbReference type="PROSITE" id="PS00632">
    <property type="entry name" value="RIBOSOMAL_S4"/>
    <property type="match status" value="1"/>
</dbReference>
<dbReference type="PROSITE" id="PS50889">
    <property type="entry name" value="S4"/>
    <property type="match status" value="1"/>
</dbReference>
<organism>
    <name type="scientific">Staphylococcus aureus (strain bovine RF122 / ET3-1)</name>
    <dbReference type="NCBI Taxonomy" id="273036"/>
    <lineage>
        <taxon>Bacteria</taxon>
        <taxon>Bacillati</taxon>
        <taxon>Bacillota</taxon>
        <taxon>Bacilli</taxon>
        <taxon>Bacillales</taxon>
        <taxon>Staphylococcaceae</taxon>
        <taxon>Staphylococcus</taxon>
    </lineage>
</organism>
<protein>
    <recommendedName>
        <fullName evidence="1">Small ribosomal subunit protein uS4</fullName>
    </recommendedName>
    <alternativeName>
        <fullName evidence="2">30S ribosomal protein S4</fullName>
    </alternativeName>
</protein>
<gene>
    <name evidence="1" type="primary">rpsD</name>
    <name type="ordered locus">SAB1578</name>
</gene>
<sequence>MARFRGSNWKKSRRLGISLSGTGKELEKRPYAPGQHGPNQRKKLSEYGLQLREKQKLRYLYGMTERQFRNTFDIAGKKFGVHGENFMILLASRLDAVVYSLGLARTRRQARQLVNHGHILVDGKRVDIPSYSVKPGQTISVREKSQKLNIIVESVEINNFVPEYLNFDADSLTGTFVRLPERSELPAEINEQLIVEYYSR</sequence>
<feature type="chain" id="PRO_0000228927" description="Small ribosomal subunit protein uS4">
    <location>
        <begin position="1"/>
        <end position="200"/>
    </location>
</feature>
<feature type="domain" description="S4 RNA-binding" evidence="1">
    <location>
        <begin position="92"/>
        <end position="155"/>
    </location>
</feature>
<name>RS4_STAAB</name>
<comment type="function">
    <text evidence="1">One of the primary rRNA binding proteins, it binds directly to 16S rRNA where it nucleates assembly of the body of the 30S subunit.</text>
</comment>
<comment type="function">
    <text evidence="1">With S5 and S12 plays an important role in translational accuracy.</text>
</comment>
<comment type="subunit">
    <text evidence="1">Part of the 30S ribosomal subunit. Contacts protein S5. The interaction surface between S4 and S5 is involved in control of translational fidelity.</text>
</comment>
<comment type="similarity">
    <text evidence="1">Belongs to the universal ribosomal protein uS4 family.</text>
</comment>
<proteinExistence type="evidence at protein level"/>
<accession>Q2YTH0</accession>
<reference key="1">
    <citation type="journal article" date="2007" name="PLoS ONE">
        <title>Molecular correlates of host specialization in Staphylococcus aureus.</title>
        <authorList>
            <person name="Herron-Olson L."/>
            <person name="Fitzgerald J.R."/>
            <person name="Musser J.M."/>
            <person name="Kapur V."/>
        </authorList>
    </citation>
    <scope>NUCLEOTIDE SEQUENCE [LARGE SCALE GENOMIC DNA]</scope>
    <source>
        <strain>bovine RF122 / ET3-1</strain>
    </source>
</reference>